<proteinExistence type="inferred from homology"/>
<comment type="similarity">
    <text evidence="1">Belongs to the bacterial ribosomal protein bL27 family.</text>
</comment>
<feature type="chain" id="PRO_1000146516" description="Large ribosomal subunit protein bL27">
    <location>
        <begin position="1"/>
        <end position="84"/>
    </location>
</feature>
<keyword id="KW-1185">Reference proteome</keyword>
<keyword id="KW-0687">Ribonucleoprotein</keyword>
<keyword id="KW-0689">Ribosomal protein</keyword>
<dbReference type="EMBL" id="CP000932">
    <property type="protein sequence ID" value="ACM63547.1"/>
    <property type="molecule type" value="Genomic_DNA"/>
</dbReference>
<dbReference type="RefSeq" id="WP_002862355.1">
    <property type="nucleotide sequence ID" value="NC_012039.1"/>
</dbReference>
<dbReference type="SMR" id="B9KER2"/>
<dbReference type="STRING" id="306263.Cla_0184"/>
<dbReference type="GeneID" id="93004273"/>
<dbReference type="KEGG" id="cla:CLA_0184"/>
<dbReference type="eggNOG" id="COG0211">
    <property type="taxonomic scope" value="Bacteria"/>
</dbReference>
<dbReference type="HOGENOM" id="CLU_095424_4_0_7"/>
<dbReference type="Proteomes" id="UP000007727">
    <property type="component" value="Chromosome"/>
</dbReference>
<dbReference type="GO" id="GO:0022625">
    <property type="term" value="C:cytosolic large ribosomal subunit"/>
    <property type="evidence" value="ECO:0007669"/>
    <property type="project" value="TreeGrafter"/>
</dbReference>
<dbReference type="GO" id="GO:0003735">
    <property type="term" value="F:structural constituent of ribosome"/>
    <property type="evidence" value="ECO:0007669"/>
    <property type="project" value="InterPro"/>
</dbReference>
<dbReference type="GO" id="GO:0006412">
    <property type="term" value="P:translation"/>
    <property type="evidence" value="ECO:0007669"/>
    <property type="project" value="UniProtKB-UniRule"/>
</dbReference>
<dbReference type="FunFam" id="2.40.50.100:FF:000026">
    <property type="entry name" value="50S ribosomal protein L27"/>
    <property type="match status" value="1"/>
</dbReference>
<dbReference type="Gene3D" id="2.40.50.100">
    <property type="match status" value="1"/>
</dbReference>
<dbReference type="HAMAP" id="MF_00539">
    <property type="entry name" value="Ribosomal_bL27"/>
    <property type="match status" value="1"/>
</dbReference>
<dbReference type="InterPro" id="IPR001684">
    <property type="entry name" value="Ribosomal_bL27"/>
</dbReference>
<dbReference type="InterPro" id="IPR018261">
    <property type="entry name" value="Ribosomal_bL27_CS"/>
</dbReference>
<dbReference type="NCBIfam" id="TIGR00062">
    <property type="entry name" value="L27"/>
    <property type="match status" value="1"/>
</dbReference>
<dbReference type="PANTHER" id="PTHR15893:SF0">
    <property type="entry name" value="LARGE RIBOSOMAL SUBUNIT PROTEIN BL27M"/>
    <property type="match status" value="1"/>
</dbReference>
<dbReference type="PANTHER" id="PTHR15893">
    <property type="entry name" value="RIBOSOMAL PROTEIN L27"/>
    <property type="match status" value="1"/>
</dbReference>
<dbReference type="Pfam" id="PF01016">
    <property type="entry name" value="Ribosomal_L27"/>
    <property type="match status" value="1"/>
</dbReference>
<dbReference type="PRINTS" id="PR00063">
    <property type="entry name" value="RIBOSOMALL27"/>
</dbReference>
<dbReference type="SUPFAM" id="SSF110324">
    <property type="entry name" value="Ribosomal L27 protein-like"/>
    <property type="match status" value="1"/>
</dbReference>
<dbReference type="PROSITE" id="PS00831">
    <property type="entry name" value="RIBOSOMAL_L27"/>
    <property type="match status" value="1"/>
</dbReference>
<protein>
    <recommendedName>
        <fullName evidence="1">Large ribosomal subunit protein bL27</fullName>
    </recommendedName>
    <alternativeName>
        <fullName evidence="2">50S ribosomal protein L27</fullName>
    </alternativeName>
</protein>
<gene>
    <name evidence="1" type="primary">rpmA</name>
    <name type="ordered locus">Cla_0184</name>
</gene>
<name>RL27_CAMLR</name>
<evidence type="ECO:0000255" key="1">
    <source>
        <dbReference type="HAMAP-Rule" id="MF_00539"/>
    </source>
</evidence>
<evidence type="ECO:0000305" key="2"/>
<accession>B9KER2</accession>
<organism>
    <name type="scientific">Campylobacter lari (strain RM2100 / D67 / ATCC BAA-1060)</name>
    <dbReference type="NCBI Taxonomy" id="306263"/>
    <lineage>
        <taxon>Bacteria</taxon>
        <taxon>Pseudomonadati</taxon>
        <taxon>Campylobacterota</taxon>
        <taxon>Epsilonproteobacteria</taxon>
        <taxon>Campylobacterales</taxon>
        <taxon>Campylobacteraceae</taxon>
        <taxon>Campylobacter</taxon>
    </lineage>
</organism>
<sequence length="84" mass="9284">MAHKKGQGSTQNNRDSIGRRLGVKKFGGEFVRAGNIIIRQRGTATHAGNNVGMGKDHTIFALIDGFVKFERKDKNRKKVSVYPA</sequence>
<reference key="1">
    <citation type="journal article" date="2008" name="Foodborne Pathog. Dis.">
        <title>The complete genome sequence and analysis of the human pathogen Campylobacter lari.</title>
        <authorList>
            <person name="Miller W.G."/>
            <person name="Wang G."/>
            <person name="Binnewies T.T."/>
            <person name="Parker C.T."/>
        </authorList>
    </citation>
    <scope>NUCLEOTIDE SEQUENCE [LARGE SCALE GENOMIC DNA]</scope>
    <source>
        <strain>RM2100 / D67 / ATCC BAA-1060</strain>
    </source>
</reference>